<name>MTA_COLVI</name>
<dbReference type="EMBL" id="X62511">
    <property type="protein sequence ID" value="CAA44370.1"/>
    <property type="molecule type" value="mRNA"/>
</dbReference>
<dbReference type="PIR" id="S33378">
    <property type="entry name" value="S18173"/>
</dbReference>
<dbReference type="SMR" id="P27086"/>
<dbReference type="GO" id="GO:0005737">
    <property type="term" value="C:cytoplasm"/>
    <property type="evidence" value="ECO:0007669"/>
    <property type="project" value="TreeGrafter"/>
</dbReference>
<dbReference type="GO" id="GO:0005634">
    <property type="term" value="C:nucleus"/>
    <property type="evidence" value="ECO:0007669"/>
    <property type="project" value="TreeGrafter"/>
</dbReference>
<dbReference type="GO" id="GO:0046872">
    <property type="term" value="F:metal ion binding"/>
    <property type="evidence" value="ECO:0007669"/>
    <property type="project" value="UniProtKB-KW"/>
</dbReference>
<dbReference type="GO" id="GO:0071276">
    <property type="term" value="P:cellular response to cadmium ion"/>
    <property type="evidence" value="ECO:0007669"/>
    <property type="project" value="TreeGrafter"/>
</dbReference>
<dbReference type="GO" id="GO:0071280">
    <property type="term" value="P:cellular response to copper ion"/>
    <property type="evidence" value="ECO:0007669"/>
    <property type="project" value="TreeGrafter"/>
</dbReference>
<dbReference type="GO" id="GO:0071294">
    <property type="term" value="P:cellular response to zinc ion"/>
    <property type="evidence" value="ECO:0007669"/>
    <property type="project" value="TreeGrafter"/>
</dbReference>
<dbReference type="GO" id="GO:0010273">
    <property type="term" value="P:detoxification of copper ion"/>
    <property type="evidence" value="ECO:0007669"/>
    <property type="project" value="TreeGrafter"/>
</dbReference>
<dbReference type="GO" id="GO:0006882">
    <property type="term" value="P:intracellular zinc ion homeostasis"/>
    <property type="evidence" value="ECO:0007669"/>
    <property type="project" value="TreeGrafter"/>
</dbReference>
<dbReference type="FunFam" id="4.10.10.10:FF:000001">
    <property type="entry name" value="Metallothionein"/>
    <property type="match status" value="1"/>
</dbReference>
<dbReference type="Gene3D" id="4.10.10.10">
    <property type="entry name" value="Metallothionein Isoform II"/>
    <property type="match status" value="1"/>
</dbReference>
<dbReference type="InterPro" id="IPR017854">
    <property type="entry name" value="Metalthion_dom_sf"/>
</dbReference>
<dbReference type="InterPro" id="IPR023587">
    <property type="entry name" value="Metalthion_dom_sf_vert"/>
</dbReference>
<dbReference type="InterPro" id="IPR000006">
    <property type="entry name" value="Metalthion_vert"/>
</dbReference>
<dbReference type="PANTHER" id="PTHR23299">
    <property type="entry name" value="METALLOTHIONEIN"/>
    <property type="match status" value="1"/>
</dbReference>
<dbReference type="PANTHER" id="PTHR23299:SF24">
    <property type="entry name" value="METALLOTHIONEIN-1X"/>
    <property type="match status" value="1"/>
</dbReference>
<dbReference type="Pfam" id="PF00131">
    <property type="entry name" value="Metallothio"/>
    <property type="match status" value="1"/>
</dbReference>
<dbReference type="PRINTS" id="PR00860">
    <property type="entry name" value="MTVERTEBRATE"/>
</dbReference>
<dbReference type="SUPFAM" id="SSF57868">
    <property type="entry name" value="Metallothionein"/>
    <property type="match status" value="1"/>
</dbReference>
<proteinExistence type="evidence at transcript level"/>
<protein>
    <recommendedName>
        <fullName>Metallothionein A</fullName>
        <shortName>MTA</shortName>
    </recommendedName>
</protein>
<comment type="function">
    <text>Metallothioneins have a high content of cysteine residues that bind various heavy metals.</text>
</comment>
<comment type="domain">
    <text>Class I metallothioneins contain 2 metal-binding domains: four divalent ions are chelated within cluster A of the alpha domain and are coordinated via cysteinyl thiolate bridges to 11 cysteine ligands. Cluster B, the corresponding region within the beta domain, can ligate three divalent ions to 9 cysteines.</text>
</comment>
<comment type="similarity">
    <text evidence="2">Belongs to the metallothionein superfamily. Type 1 family.</text>
</comment>
<sequence>SCAGSCKCKNCRCRSCRKSCCSCCPAGCNNCAKGCVCKEPASS</sequence>
<accession>P27086</accession>
<feature type="chain" id="PRO_0000197263" description="Metallothionein A">
    <location>
        <begin position="1" status="less than"/>
        <end position="43" status="greater than"/>
    </location>
</feature>
<feature type="region of interest" description="Beta">
    <location>
        <begin position="1" status="less than"/>
        <end position="16"/>
    </location>
</feature>
<feature type="region of interest" description="Alpha">
    <location>
        <begin position="17"/>
        <end position="43" status="greater than"/>
    </location>
</feature>
<feature type="binding site" evidence="1">
    <location>
        <position position="2"/>
    </location>
    <ligand>
        <name>a divalent metal cation</name>
        <dbReference type="ChEBI" id="CHEBI:60240"/>
        <label>2</label>
        <note>in cluster B</note>
    </ligand>
</feature>
<feature type="binding site" evidence="1">
    <location>
        <position position="2"/>
    </location>
    <ligand>
        <name>a divalent metal cation</name>
        <dbReference type="ChEBI" id="CHEBI:60240"/>
        <label>3</label>
        <note>in cluster B</note>
    </ligand>
</feature>
<feature type="binding site" evidence="1">
    <location>
        <position position="6"/>
    </location>
    <ligand>
        <name>a divalent metal cation</name>
        <dbReference type="ChEBI" id="CHEBI:60240"/>
        <label>3</label>
        <note>in cluster B</note>
    </ligand>
</feature>
<feature type="binding site" evidence="1">
    <location>
        <position position="8"/>
    </location>
    <ligand>
        <name>a divalent metal cation</name>
        <dbReference type="ChEBI" id="CHEBI:60240"/>
        <label>1</label>
        <note>in cluster B</note>
    </ligand>
</feature>
<feature type="binding site" evidence="1">
    <location>
        <position position="11"/>
    </location>
    <ligand>
        <name>a divalent metal cation</name>
        <dbReference type="ChEBI" id="CHEBI:60240"/>
        <label>1</label>
        <note>in cluster B</note>
    </ligand>
</feature>
<feature type="binding site" evidence="1">
    <location>
        <position position="11"/>
    </location>
    <ligand>
        <name>a divalent metal cation</name>
        <dbReference type="ChEBI" id="CHEBI:60240"/>
        <label>3</label>
        <note>in cluster B</note>
    </ligand>
</feature>
<feature type="binding site" evidence="1">
    <location>
        <position position="13"/>
    </location>
    <ligand>
        <name>a divalent metal cation</name>
        <dbReference type="ChEBI" id="CHEBI:60240"/>
        <label>2</label>
        <note>in cluster B</note>
    </ligand>
</feature>
<feature type="binding site" evidence="1">
    <location>
        <position position="16"/>
    </location>
    <ligand>
        <name>a divalent metal cation</name>
        <dbReference type="ChEBI" id="CHEBI:60240"/>
        <label>3</label>
        <note>in cluster B</note>
    </ligand>
</feature>
<feature type="binding site" evidence="1">
    <location>
        <position position="20"/>
    </location>
    <ligand>
        <name>a divalent metal cation</name>
        <dbReference type="ChEBI" id="CHEBI:60240"/>
        <label>4</label>
        <note>in cluster A</note>
    </ligand>
</feature>
<feature type="binding site" evidence="1">
    <location>
        <position position="21"/>
    </location>
    <ligand>
        <name>a divalent metal cation</name>
        <dbReference type="ChEBI" id="CHEBI:60240"/>
        <label>4</label>
        <note>in cluster A</note>
    </ligand>
</feature>
<feature type="binding site" evidence="1">
    <location>
        <position position="21"/>
    </location>
    <ligand>
        <name>a divalent metal cation</name>
        <dbReference type="ChEBI" id="CHEBI:60240"/>
        <label>5</label>
        <note>in cluster A</note>
    </ligand>
</feature>
<feature type="binding site" evidence="1">
    <location>
        <position position="23"/>
    </location>
    <ligand>
        <name>a divalent metal cation</name>
        <dbReference type="ChEBI" id="CHEBI:60240"/>
        <label>5</label>
        <note>in cluster A</note>
    </ligand>
</feature>
<feature type="binding site" evidence="1">
    <location>
        <position position="24"/>
    </location>
    <ligand>
        <name>a divalent metal cation</name>
        <dbReference type="ChEBI" id="CHEBI:60240"/>
        <label>5</label>
        <note>in cluster A</note>
    </ligand>
</feature>
<feature type="binding site" evidence="1">
    <location>
        <position position="24"/>
    </location>
    <ligand>
        <name>a divalent metal cation</name>
        <dbReference type="ChEBI" id="CHEBI:60240"/>
        <label>6</label>
        <note>in cluster A</note>
    </ligand>
</feature>
<feature type="binding site" evidence="1">
    <location>
        <position position="28"/>
    </location>
    <ligand>
        <name>a divalent metal cation</name>
        <dbReference type="ChEBI" id="CHEBI:60240"/>
        <label>6</label>
        <note>in cluster A</note>
    </ligand>
</feature>
<feature type="binding site" evidence="1">
    <location>
        <position position="31"/>
    </location>
    <ligand>
        <name>a divalent metal cation</name>
        <dbReference type="ChEBI" id="CHEBI:60240"/>
        <label>4</label>
        <note>in cluster A</note>
    </ligand>
</feature>
<feature type="binding site" evidence="1">
    <location>
        <position position="31"/>
    </location>
    <ligand>
        <name>a divalent metal cation</name>
        <dbReference type="ChEBI" id="CHEBI:60240"/>
        <label>6</label>
        <note>in cluster A</note>
    </ligand>
</feature>
<feature type="binding site" evidence="1">
    <location>
        <position position="35"/>
    </location>
    <ligand>
        <name>a divalent metal cation</name>
        <dbReference type="ChEBI" id="CHEBI:60240"/>
        <label>4</label>
        <note>in cluster A</note>
    </ligand>
</feature>
<feature type="binding site" evidence="1">
    <location>
        <position position="37"/>
    </location>
    <ligand>
        <name>a divalent metal cation</name>
        <dbReference type="ChEBI" id="CHEBI:60240"/>
        <label>5</label>
        <note>in cluster A</note>
    </ligand>
</feature>
<feature type="binding site" evidence="1">
    <location>
        <position position="37"/>
    </location>
    <ligand>
        <name>a divalent metal cation</name>
        <dbReference type="ChEBI" id="CHEBI:60240"/>
        <label>7</label>
        <note>in cluster A</note>
    </ligand>
</feature>
<feature type="non-terminal residue">
    <location>
        <position position="1"/>
    </location>
</feature>
<feature type="non-terminal residue">
    <location>
        <position position="43"/>
    </location>
</feature>
<organism>
    <name type="scientific">Colinus virginianus</name>
    <name type="common">Northern bobwhite</name>
    <name type="synonym">Tetrao virginianus</name>
    <dbReference type="NCBI Taxonomy" id="9014"/>
    <lineage>
        <taxon>Eukaryota</taxon>
        <taxon>Metazoa</taxon>
        <taxon>Chordata</taxon>
        <taxon>Craniata</taxon>
        <taxon>Vertebrata</taxon>
        <taxon>Euteleostomi</taxon>
        <taxon>Archelosauria</taxon>
        <taxon>Archosauria</taxon>
        <taxon>Dinosauria</taxon>
        <taxon>Saurischia</taxon>
        <taxon>Theropoda</taxon>
        <taxon>Coelurosauria</taxon>
        <taxon>Aves</taxon>
        <taxon>Neognathae</taxon>
        <taxon>Galloanserae</taxon>
        <taxon>Galliformes</taxon>
        <taxon>Odontophoridae</taxon>
        <taxon>Colinus</taxon>
    </lineage>
</organism>
<keyword id="KW-0479">Metal-binding</keyword>
<keyword id="KW-0480">Metal-thiolate cluster</keyword>
<reference key="1">
    <citation type="journal article" date="1993" name="J. Mol. Evol.">
        <title>Evolution of avian metallothionein: DNA sequence analyses of the turkey metallothionein gene and metallothionein cDNAs from pheasant and quail.</title>
        <authorList>
            <person name="Shartzer K.L."/>
            <person name="Kage K."/>
            <person name="Sobieski R.J."/>
            <person name="Andrews G.K."/>
        </authorList>
    </citation>
    <scope>NUCLEOTIDE SEQUENCE [MRNA]</scope>
    <source>
        <tissue>Liver</tissue>
    </source>
</reference>
<evidence type="ECO:0000250" key="1">
    <source>
        <dbReference type="UniProtKB" id="P02795"/>
    </source>
</evidence>
<evidence type="ECO:0000305" key="2"/>